<comment type="function">
    <text evidence="1">May be the polymerase that links individual UDP-N-acetyl-D-mannosamine monomers. In serotype A the capsule is composed of repeated units of (alpha 1-6)-linked N-acetyl-D-mannosamine-1-phosphate (By similarity).</text>
</comment>
<comment type="miscellaneous">
    <text>Stealth proteins are part of a protein family that is conserved from bacteria to higher eukaryotes. Family members were first identified in microbes as proteins that help pathogens to elude the host innate immune system. Microbial stealth proteins are involved in the biosynthesis of exopolysaccharides. Stealth proteins are predicted to function as hexose-1-phosphoryltransferases.</text>
</comment>
<comment type="similarity">
    <text evidence="2">Belongs to the stealth family.</text>
</comment>
<gene>
    <name type="primary">sacB</name>
</gene>
<proteinExistence type="inferred from homology"/>
<organism>
    <name type="scientific">Neisseria meningitidis serogroup A</name>
    <dbReference type="NCBI Taxonomy" id="65699"/>
    <lineage>
        <taxon>Bacteria</taxon>
        <taxon>Pseudomonadati</taxon>
        <taxon>Pseudomonadota</taxon>
        <taxon>Betaproteobacteria</taxon>
        <taxon>Neisseriales</taxon>
        <taxon>Neisseriaceae</taxon>
        <taxon>Neisseria</taxon>
    </lineage>
</organism>
<feature type="chain" id="PRO_0000235952" description="Capsular polysaccharide phosphotransferase SacB">
    <location>
        <begin position="1"/>
        <end position="545"/>
    </location>
</feature>
<keyword id="KW-0270">Exopolysaccharide synthesis</keyword>
<keyword id="KW-0808">Transferase</keyword>
<evidence type="ECO:0000250" key="1"/>
<evidence type="ECO:0000305" key="2"/>
<protein>
    <recommendedName>
        <fullName>Capsular polysaccharide phosphotransferase SacB</fullName>
        <ecNumber>2.7.-.-</ecNumber>
    </recommendedName>
    <alternativeName>
        <fullName>Stealth protein SacB</fullName>
    </alternativeName>
</protein>
<sequence>MFILNNRKWRKLKRDPSAFFRDSKFNFLRYFSAKKFAKNFKNSSHIHKTNISKAQSNISSTLKQNRKQDMLIPINFFNFEYIVKKLNNQNAIGVYILPSNLTLKPALCILESHKEDFLNKFLLTISSENLKLQYKFNGQIKNPKSVNEIWTDLFSIAHVDMKLSTDRTLSSSISQFWFRLEFCKEDKDFILFPTANRYSRKLWKHSIKNNQLFKEGIRNYSEISSLPYEEDHNFDIDLVFTWVNSEDKNWQELYKKYKPDFNSDATSTSRFLSRDELKFALRSWEMNGSFIRKIFIVSNCAPPAWLDLNNPKIQWVYHEEIMPQSALPTFSSHAIETSLHHIPGISNYFIYSNDDFLLTKPLNKDNFFYSNGIAKLRLEAWGNVNGECTEGEPDYLNGARNANTLLEKEFKKFTTKLHTHSPQSMRTDILFEMEKKYPEEFNRTLHNKFRSLDDIAVTGYLYHHYALLSGRALQSSDKTELVQQNHDFKKKLNNVVTLTKERNFDKLPLSVCINDGADSHLNEEWNVQVIKFLETLFPLPSSFEK</sequence>
<dbReference type="EC" id="2.7.-.-"/>
<dbReference type="EMBL" id="AY234203">
    <property type="protein sequence ID" value="AAO85301.1"/>
    <property type="molecule type" value="Genomic_DNA"/>
</dbReference>
<dbReference type="EMBL" id="AY234205">
    <property type="protein sequence ID" value="AAO85303.1"/>
    <property type="molecule type" value="Genomic_DNA"/>
</dbReference>
<dbReference type="EMBL" id="AY281049">
    <property type="protein sequence ID" value="AAP34772.1"/>
    <property type="molecule type" value="Genomic_DNA"/>
</dbReference>
<dbReference type="SMR" id="Q83U59"/>
<dbReference type="OMA" id="WINRIWI"/>
<dbReference type="GO" id="GO:0016772">
    <property type="term" value="F:transferase activity, transferring phosphorus-containing groups"/>
    <property type="evidence" value="ECO:0007669"/>
    <property type="project" value="InterPro"/>
</dbReference>
<dbReference type="GO" id="GO:0000271">
    <property type="term" value="P:polysaccharide biosynthetic process"/>
    <property type="evidence" value="ECO:0007669"/>
    <property type="project" value="UniProtKB-KW"/>
</dbReference>
<dbReference type="InterPro" id="IPR047141">
    <property type="entry name" value="Stealth"/>
</dbReference>
<dbReference type="InterPro" id="IPR031358">
    <property type="entry name" value="Stealth_CR1"/>
</dbReference>
<dbReference type="InterPro" id="IPR021520">
    <property type="entry name" value="Stealth_CR2"/>
</dbReference>
<dbReference type="InterPro" id="IPR031357">
    <property type="entry name" value="Stealth_CR3"/>
</dbReference>
<dbReference type="InterPro" id="IPR031356">
    <property type="entry name" value="Stealth_CR4"/>
</dbReference>
<dbReference type="PANTHER" id="PTHR24045">
    <property type="match status" value="1"/>
</dbReference>
<dbReference type="PANTHER" id="PTHR24045:SF0">
    <property type="entry name" value="N-ACETYLGLUCOSAMINE-1-PHOSPHOTRANSFERASE SUBUNITS ALPHA_BETA"/>
    <property type="match status" value="1"/>
</dbReference>
<dbReference type="Pfam" id="PF17101">
    <property type="entry name" value="Stealth_CR1"/>
    <property type="match status" value="1"/>
</dbReference>
<dbReference type="Pfam" id="PF11380">
    <property type="entry name" value="Stealth_CR2"/>
    <property type="match status" value="1"/>
</dbReference>
<dbReference type="Pfam" id="PF17102">
    <property type="entry name" value="Stealth_CR3"/>
    <property type="match status" value="1"/>
</dbReference>
<dbReference type="Pfam" id="PF17103">
    <property type="entry name" value="Stealth_CR4"/>
    <property type="match status" value="1"/>
</dbReference>
<accession>Q83U59</accession>
<name>SACB3_NEIMD</name>
<reference key="1">
    <citation type="journal article" date="2004" name="J. Clin. Microbiol.">
        <title>Use of real-time PCR to resolve slide agglutination discrepancies in serogroup identification of Neisseria meningitidis.</title>
        <authorList>
            <person name="Mothershed E.A."/>
            <person name="Sacchi C.T."/>
            <person name="Whitney A.M."/>
            <person name="Barnett G.A."/>
            <person name="Ajello G.W."/>
            <person name="Schmink S."/>
            <person name="Mayer L.W."/>
            <person name="Phelan M."/>
            <person name="Taylor T.H. Jr."/>
            <person name="Bernhardt S.A."/>
            <person name="Rosenstein N.E."/>
            <person name="Popovic T."/>
        </authorList>
    </citation>
    <scope>NUCLEOTIDE SEQUENCE [GENOMIC DNA]</scope>
    <source>
        <strain>M1124 / Serogroup A</strain>
        <strain>M3562 / Serogroup A</strain>
        <strain>M7060 / Serogroup A</strain>
    </source>
</reference>
<reference key="2">
    <citation type="journal article" date="2005" name="PLoS Comput. Biol.">
        <title>Stealth proteins: in silico identification of a novel protein family rendering bacterial pathogens invisible to host immune defense.</title>
        <authorList>
            <person name="Sperisen P."/>
            <person name="Schmid C.D."/>
            <person name="Bucher P."/>
            <person name="Zilian O."/>
        </authorList>
    </citation>
    <scope>IDENTIFICATION AS A STEALTH PROTEIN</scope>
    <scope>PREDICTION OF FUNCTION</scope>
</reference>